<keyword id="KW-0472">Membrane</keyword>
<keyword id="KW-0496">Mitochondrion</keyword>
<keyword id="KW-0999">Mitochondrion inner membrane</keyword>
<keyword id="KW-0507">mRNA processing</keyword>
<keyword id="KW-1185">Reference proteome</keyword>
<keyword id="KW-0694">RNA-binding</keyword>
<keyword id="KW-0809">Transit peptide</keyword>
<keyword id="KW-0812">Transmembrane</keyword>
<keyword id="KW-1133">Transmembrane helix</keyword>
<dbReference type="EMBL" id="CH408155">
    <property type="protein sequence ID" value="EDK36188.2"/>
    <property type="molecule type" value="Genomic_DNA"/>
</dbReference>
<dbReference type="RefSeq" id="XP_001486909.1">
    <property type="nucleotide sequence ID" value="XM_001486859.1"/>
</dbReference>
<dbReference type="FunCoup" id="A5DAI1">
    <property type="interactions" value="130"/>
</dbReference>
<dbReference type="STRING" id="294746.A5DAI1"/>
<dbReference type="GeneID" id="5129298"/>
<dbReference type="KEGG" id="pgu:PGUG_00286"/>
<dbReference type="VEuPathDB" id="FungiDB:PGUG_00286"/>
<dbReference type="eggNOG" id="ENOG502QS0P">
    <property type="taxonomic scope" value="Eukaryota"/>
</dbReference>
<dbReference type="HOGENOM" id="CLU_007861_1_0_1"/>
<dbReference type="InParanoid" id="A5DAI1"/>
<dbReference type="OMA" id="FQFFRPY"/>
<dbReference type="OrthoDB" id="10267654at2759"/>
<dbReference type="Proteomes" id="UP000001997">
    <property type="component" value="Unassembled WGS sequence"/>
</dbReference>
<dbReference type="GO" id="GO:0005743">
    <property type="term" value="C:mitochondrial inner membrane"/>
    <property type="evidence" value="ECO:0007669"/>
    <property type="project" value="UniProtKB-SubCell"/>
</dbReference>
<dbReference type="GO" id="GO:0003723">
    <property type="term" value="F:RNA binding"/>
    <property type="evidence" value="ECO:0007669"/>
    <property type="project" value="UniProtKB-KW"/>
</dbReference>
<dbReference type="GO" id="GO:0000002">
    <property type="term" value="P:mitochondrial genome maintenance"/>
    <property type="evidence" value="ECO:0007669"/>
    <property type="project" value="EnsemblFungi"/>
</dbReference>
<dbReference type="GO" id="GO:0006397">
    <property type="term" value="P:mRNA processing"/>
    <property type="evidence" value="ECO:0007669"/>
    <property type="project" value="UniProtKB-KW"/>
</dbReference>
<dbReference type="CDD" id="cd12433">
    <property type="entry name" value="RRM_Yme2p_like"/>
    <property type="match status" value="1"/>
</dbReference>
<dbReference type="InterPro" id="IPR018850">
    <property type="entry name" value="Mt_escape_2_C"/>
</dbReference>
<dbReference type="InterPro" id="IPR027417">
    <property type="entry name" value="P-loop_NTPase"/>
</dbReference>
<dbReference type="InterPro" id="IPR035979">
    <property type="entry name" value="RBD_domain_sf"/>
</dbReference>
<dbReference type="InterPro" id="IPR039627">
    <property type="entry name" value="Yme2_C"/>
</dbReference>
<dbReference type="InterPro" id="IPR034260">
    <property type="entry name" value="Yme2_RRM"/>
</dbReference>
<dbReference type="PANTHER" id="PTHR32198">
    <property type="entry name" value="MITOCHONDRIAL ESCAPE PROTEIN 2"/>
    <property type="match status" value="1"/>
</dbReference>
<dbReference type="PANTHER" id="PTHR32198:SF2">
    <property type="entry name" value="MITOCHONDRIAL ESCAPE PROTEIN 2"/>
    <property type="match status" value="1"/>
</dbReference>
<dbReference type="Pfam" id="PF10443">
    <property type="entry name" value="RNA12"/>
    <property type="match status" value="1"/>
</dbReference>
<dbReference type="SUPFAM" id="SSF52540">
    <property type="entry name" value="P-loop containing nucleoside triphosphate hydrolases"/>
    <property type="match status" value="1"/>
</dbReference>
<dbReference type="SUPFAM" id="SSF54928">
    <property type="entry name" value="RNA-binding domain, RBD"/>
    <property type="match status" value="1"/>
</dbReference>
<organism>
    <name type="scientific">Meyerozyma guilliermondii (strain ATCC 6260 / CBS 566 / DSM 6381 / JCM 1539 / NBRC 10279 / NRRL Y-324)</name>
    <name type="common">Yeast</name>
    <name type="synonym">Candida guilliermondii</name>
    <dbReference type="NCBI Taxonomy" id="294746"/>
    <lineage>
        <taxon>Eukaryota</taxon>
        <taxon>Fungi</taxon>
        <taxon>Dikarya</taxon>
        <taxon>Ascomycota</taxon>
        <taxon>Saccharomycotina</taxon>
        <taxon>Pichiomycetes</taxon>
        <taxon>Debaryomycetaceae</taxon>
        <taxon>Meyerozyma</taxon>
    </lineage>
</organism>
<evidence type="ECO:0000250" key="1"/>
<evidence type="ECO:0000255" key="2"/>
<evidence type="ECO:0000256" key="3">
    <source>
        <dbReference type="SAM" id="MobiDB-lite"/>
    </source>
</evidence>
<evidence type="ECO:0000305" key="4"/>
<name>YME2_PICGU</name>
<reference key="1">
    <citation type="journal article" date="2009" name="Nature">
        <title>Evolution of pathogenicity and sexual reproduction in eight Candida genomes.</title>
        <authorList>
            <person name="Butler G."/>
            <person name="Rasmussen M.D."/>
            <person name="Lin M.F."/>
            <person name="Santos M.A.S."/>
            <person name="Sakthikumar S."/>
            <person name="Munro C.A."/>
            <person name="Rheinbay E."/>
            <person name="Grabherr M."/>
            <person name="Forche A."/>
            <person name="Reedy J.L."/>
            <person name="Agrafioti I."/>
            <person name="Arnaud M.B."/>
            <person name="Bates S."/>
            <person name="Brown A.J.P."/>
            <person name="Brunke S."/>
            <person name="Costanzo M.C."/>
            <person name="Fitzpatrick D.A."/>
            <person name="de Groot P.W.J."/>
            <person name="Harris D."/>
            <person name="Hoyer L.L."/>
            <person name="Hube B."/>
            <person name="Klis F.M."/>
            <person name="Kodira C."/>
            <person name="Lennard N."/>
            <person name="Logue M.E."/>
            <person name="Martin R."/>
            <person name="Neiman A.M."/>
            <person name="Nikolaou E."/>
            <person name="Quail M.A."/>
            <person name="Quinn J."/>
            <person name="Santos M.C."/>
            <person name="Schmitzberger F.F."/>
            <person name="Sherlock G."/>
            <person name="Shah P."/>
            <person name="Silverstein K.A.T."/>
            <person name="Skrzypek M.S."/>
            <person name="Soll D."/>
            <person name="Staggs R."/>
            <person name="Stansfield I."/>
            <person name="Stumpf M.P.H."/>
            <person name="Sudbery P.E."/>
            <person name="Srikantha T."/>
            <person name="Zeng Q."/>
            <person name="Berman J."/>
            <person name="Berriman M."/>
            <person name="Heitman J."/>
            <person name="Gow N.A.R."/>
            <person name="Lorenz M.C."/>
            <person name="Birren B.W."/>
            <person name="Kellis M."/>
            <person name="Cuomo C.A."/>
        </authorList>
    </citation>
    <scope>NUCLEOTIDE SEQUENCE [LARGE SCALE GENOMIC DNA]</scope>
    <source>
        <strain>ATCC 6260 / CBS 566 / DSM 6381 / JCM 1539 / NBRC 10279 / NRRL Y-324</strain>
    </source>
</reference>
<comment type="function">
    <text evidence="1">Plays a role in maintaining the mitochondrial genome and in controlling the mtDNA escape. Involved in the regulation of mtDNA nucleotide structure and number. May have a dispensable role in early maturation of pre-rRNA (By similarity).</text>
</comment>
<comment type="subcellular location">
    <subcellularLocation>
        <location evidence="1">Mitochondrion inner membrane</location>
        <topology evidence="1">Single-pass membrane protein</topology>
    </subcellularLocation>
</comment>
<comment type="similarity">
    <text evidence="4">Belongs to the YME2 family.</text>
</comment>
<sequence>MIRTFATIANRGPGIRLATLAASRNLGYSSGGRISSVRIEKLRFSPFRSSTSLRYTSDIQHVMQEADSLDVNNSVSNTGVLDYDRKNAVVLYFDHIYPFSVSRYSWKQYFTLLFPVNRCSEDDIRERVMNLSSTEKEPLPKDVRILELVPMRRDGGVFVKFQLPATMSARELVGLICQNTKENEQAYGERFLVGPLNKIWNHFPRCFQVKGTPWIEDLRRFPSVKLSVKFEGERLTEEELYVLFRRYGLIIDIAPGSGTEPAVIHFRKIRSAICAKNCVTGITLNSGNTVVHIQYLPLKRVNYITDFIGNHQRIAIPIILALLATAAVFIFDPIREWFIMQNVSHRHALDSYKDNKFLKLVSLPYEQVRRWIDSGYDYFDSKFGCDEEDEFGGEKGEAPNDLWSERYEKVKQLKLWIYENINTFIIVRGPKGSGKEELVLEHTLRDDPILGNKLLYIDCEALVKSRSDNALIEATAQQLGYFPVFTWTNSISQFVDLGVQGLTGQKSGLSESKETQLKNMFGLTSSAIRKLALQDYAKYKKSVLRQRRRQQGDSTSEDILSEDEYLSQHPERKPVIVIDKFAGRADGDQDFIFKMISEWSAQLVQSNLAHVIILTHDVGSMSHLTSALPNQVMKSISLSDASQRSARHYVLNQLNKESQAQVNELDSCLEPLGGRMLDLQAFVRRMRSGEAPGDALEEMVSQASEQITTFFLSASSTQNSWSTAQVWLLIKLLAKQESISYETLCHDPLFKSPDSLSILSTLEKHDLISLISDKGVLNTVSTGRPLYKAAFRSLVEDPKIFRIYEEDLYNKLIALENAKIAKLEDEFAKLASVDARLVRNRLDYVSNKIVASTDKITDYEEKISGLSSKKSSWF</sequence>
<proteinExistence type="inferred from homology"/>
<feature type="transit peptide" description="Mitochondrion" evidence="2">
    <location>
        <begin position="1"/>
        <end position="55"/>
    </location>
</feature>
<feature type="chain" id="PRO_0000343129" description="Mitochondrial escape protein 2">
    <location>
        <begin position="56"/>
        <end position="874"/>
    </location>
</feature>
<feature type="topological domain" description="Mitochondrial matrix" evidence="2">
    <location>
        <begin position="56"/>
        <end position="313"/>
    </location>
</feature>
<feature type="transmembrane region" description="Helical" evidence="2">
    <location>
        <begin position="314"/>
        <end position="334"/>
    </location>
</feature>
<feature type="topological domain" description="Mitochondrial intermembrane" evidence="2">
    <location>
        <begin position="335"/>
        <end position="874"/>
    </location>
</feature>
<feature type="domain" description="RRM">
    <location>
        <begin position="224"/>
        <end position="297"/>
    </location>
</feature>
<feature type="region of interest" description="Disordered" evidence="3">
    <location>
        <begin position="547"/>
        <end position="566"/>
    </location>
</feature>
<feature type="compositionally biased region" description="Acidic residues" evidence="3">
    <location>
        <begin position="555"/>
        <end position="565"/>
    </location>
</feature>
<accession>A5DAI1</accession>
<protein>
    <recommendedName>
        <fullName>Mitochondrial escape protein 2</fullName>
    </recommendedName>
</protein>
<gene>
    <name type="primary">YME2</name>
    <name type="ORF">PGUG_00286</name>
</gene>